<evidence type="ECO:0000255" key="1"/>
<evidence type="ECO:0000269" key="2">
    <source>
    </source>
</evidence>
<evidence type="ECO:0000269" key="3">
    <source>
    </source>
</evidence>
<evidence type="ECO:0000269" key="4">
    <source>
    </source>
</evidence>
<evidence type="ECO:0000303" key="5">
    <source>
    </source>
</evidence>
<evidence type="ECO:0000305" key="6"/>
<evidence type="ECO:0000305" key="7">
    <source>
    </source>
</evidence>
<name>NANX_ECOLI</name>
<gene>
    <name evidence="5" type="primary">nanX</name>
    <name type="synonym">yjhB</name>
    <name type="ordered locus">b4279</name>
    <name type="ordered locus">JW5768</name>
</gene>
<protein>
    <recommendedName>
        <fullName evidence="6">Sialic acid transporter NanX</fullName>
    </recommendedName>
</protein>
<accession>P39352</accession>
<accession>Q2M633</accession>
<comment type="function">
    <text evidence="3 4">Probably transports across the inner membrane the two dehydrated forms of N-acetylneuraminate (Neu5Ac), 2,7-anhydro-N-acetylneuraminate (2,7-AN) and 2-deoxy-2,3-didehydro-N-acetylneuraminate (2,3-EN).</text>
</comment>
<comment type="subcellular location">
    <subcellularLocation>
        <location evidence="7">Cell inner membrane</location>
        <topology evidence="1">Multi-pass membrane protein</topology>
    </subcellularLocation>
</comment>
<comment type="induction">
    <text evidence="2">Negatively regulated by the transcriptional repressor NanR. Induced by N-acetylneuraminate, via inactivation of NanR.</text>
</comment>
<comment type="disruption phenotype">
    <text evidence="3 4">Inactivation of the gene in NanR-deficient cells prevents the growth on 2,7-AN and 2,3-EN (PubMed:32542330). Deletion of the gene in strain BW25113 results in loss of growth on 2,7-AN but not on Neu5Ac (PubMed:32669363).</text>
</comment>
<comment type="miscellaneous">
    <text evidence="3 4">Bell et al. show that this transporter allows the growth of E.coli strain BW25113 on 2,7-AN as a sole carbon source (PubMed:32669363). However, Kentache et al. show that it allows the growth of E.coli on 2,7-AN and 2,3-EN, which are produced during the degradation of sialoconjugates by sialidases from other bacteria, provided the repressor NanR has been inactivated (PubMed:32542330).</text>
</comment>
<comment type="similarity">
    <text evidence="6">Belongs to the major facilitator superfamily. Sugar transporter (TC 2.A.1.1) family.</text>
</comment>
<comment type="sequence caution" evidence="6">
    <conflict type="erroneous initiation">
        <sequence resource="EMBL-CDS" id="AAA97175"/>
    </conflict>
    <text>Extended N-terminus.</text>
</comment>
<feature type="chain" id="PRO_0000050487" description="Sialic acid transporter NanX">
    <location>
        <begin position="1"/>
        <end position="405"/>
    </location>
</feature>
<feature type="topological domain" description="Cytoplasmic" evidence="1">
    <location>
        <begin position="1"/>
        <end position="20"/>
    </location>
</feature>
<feature type="transmembrane region" description="Helical; Name=1" evidence="1">
    <location>
        <begin position="21"/>
        <end position="41"/>
    </location>
</feature>
<feature type="topological domain" description="Periplasmic" evidence="1">
    <location>
        <begin position="42"/>
        <end position="53"/>
    </location>
</feature>
<feature type="transmembrane region" description="Helical; Name=2" evidence="1">
    <location>
        <begin position="54"/>
        <end position="74"/>
    </location>
</feature>
<feature type="topological domain" description="Cytoplasmic" evidence="1">
    <location>
        <begin position="75"/>
        <end position="80"/>
    </location>
</feature>
<feature type="transmembrane region" description="Helical; Name=3" evidence="1">
    <location>
        <begin position="81"/>
        <end position="101"/>
    </location>
</feature>
<feature type="topological domain" description="Periplasmic" evidence="1">
    <location>
        <position position="102"/>
    </location>
</feature>
<feature type="transmembrane region" description="Helical; Name=4" evidence="1">
    <location>
        <begin position="103"/>
        <end position="123"/>
    </location>
</feature>
<feature type="topological domain" description="Cytoplasmic" evidence="1">
    <location>
        <begin position="124"/>
        <end position="139"/>
    </location>
</feature>
<feature type="transmembrane region" description="Helical; Name=5" evidence="1">
    <location>
        <begin position="140"/>
        <end position="160"/>
    </location>
</feature>
<feature type="topological domain" description="Periplasmic" evidence="1">
    <location>
        <begin position="161"/>
        <end position="164"/>
    </location>
</feature>
<feature type="transmembrane region" description="Helical; Name=6" evidence="1">
    <location>
        <begin position="165"/>
        <end position="185"/>
    </location>
</feature>
<feature type="topological domain" description="Cytoplasmic" evidence="1">
    <location>
        <begin position="186"/>
        <end position="214"/>
    </location>
</feature>
<feature type="transmembrane region" description="Helical; Name=7" evidence="1">
    <location>
        <begin position="215"/>
        <end position="235"/>
    </location>
</feature>
<feature type="topological domain" description="Periplasmic" evidence="1">
    <location>
        <begin position="236"/>
        <end position="250"/>
    </location>
</feature>
<feature type="transmembrane region" description="Helical; Name=8" evidence="1">
    <location>
        <begin position="251"/>
        <end position="271"/>
    </location>
</feature>
<feature type="topological domain" description="Cytoplasmic" evidence="1">
    <location>
        <begin position="272"/>
        <end position="282"/>
    </location>
</feature>
<feature type="transmembrane region" description="Helical; Name=9" evidence="1">
    <location>
        <begin position="283"/>
        <end position="303"/>
    </location>
</feature>
<feature type="topological domain" description="Periplasmic" evidence="1">
    <location>
        <begin position="304"/>
        <end position="307"/>
    </location>
</feature>
<feature type="transmembrane region" description="Helical; Name=10" evidence="1">
    <location>
        <begin position="308"/>
        <end position="328"/>
    </location>
</feature>
<feature type="topological domain" description="Cytoplasmic" evidence="1">
    <location>
        <begin position="329"/>
        <end position="344"/>
    </location>
</feature>
<feature type="transmembrane region" description="Helical; Name=11" evidence="1">
    <location>
        <begin position="345"/>
        <end position="365"/>
    </location>
</feature>
<feature type="topological domain" description="Periplasmic" evidence="1">
    <location>
        <begin position="366"/>
        <end position="371"/>
    </location>
</feature>
<feature type="transmembrane region" description="Helical; Name=12" evidence="1">
    <location>
        <begin position="372"/>
        <end position="392"/>
    </location>
</feature>
<feature type="topological domain" description="Cytoplasmic" evidence="1">
    <location>
        <begin position="393"/>
        <end position="405"/>
    </location>
</feature>
<dbReference type="EMBL" id="U14003">
    <property type="protein sequence ID" value="AAA97175.1"/>
    <property type="status" value="ALT_INIT"/>
    <property type="molecule type" value="Genomic_DNA"/>
</dbReference>
<dbReference type="EMBL" id="U00096">
    <property type="protein sequence ID" value="AAC77235.2"/>
    <property type="molecule type" value="Genomic_DNA"/>
</dbReference>
<dbReference type="EMBL" id="AP009048">
    <property type="protein sequence ID" value="BAE78273.1"/>
    <property type="molecule type" value="Genomic_DNA"/>
</dbReference>
<dbReference type="PIR" id="S56504">
    <property type="entry name" value="S56504"/>
</dbReference>
<dbReference type="RefSeq" id="NP_418699.4">
    <property type="nucleotide sequence ID" value="NC_000913.3"/>
</dbReference>
<dbReference type="RefSeq" id="WP_000179691.1">
    <property type="nucleotide sequence ID" value="NZ_SSUV01000014.1"/>
</dbReference>
<dbReference type="PDB" id="4J09">
    <property type="method" value="X-ray"/>
    <property type="resolution" value="1.90 A"/>
    <property type="chains" value="B=101-106"/>
</dbReference>
<dbReference type="PDBsum" id="4J09"/>
<dbReference type="SMR" id="P39352"/>
<dbReference type="BioGRID" id="4262721">
    <property type="interactions" value="207"/>
</dbReference>
<dbReference type="FunCoup" id="P39352">
    <property type="interactions" value="342"/>
</dbReference>
<dbReference type="STRING" id="511145.b4279"/>
<dbReference type="PaxDb" id="511145-b4279"/>
<dbReference type="EnsemblBacteria" id="AAC77235">
    <property type="protein sequence ID" value="AAC77235"/>
    <property type="gene ID" value="b4279"/>
</dbReference>
<dbReference type="GeneID" id="948807"/>
<dbReference type="KEGG" id="ecj:JW5768"/>
<dbReference type="KEGG" id="eco:b4279"/>
<dbReference type="KEGG" id="ecoc:C3026_23075"/>
<dbReference type="PATRIC" id="fig|1411691.4.peg.2424"/>
<dbReference type="EchoBASE" id="EB2432"/>
<dbReference type="eggNOG" id="COG2814">
    <property type="taxonomic scope" value="Bacteria"/>
</dbReference>
<dbReference type="HOGENOM" id="CLU_001265_46_8_6"/>
<dbReference type="InParanoid" id="P39352"/>
<dbReference type="OMA" id="DFVTYPF"/>
<dbReference type="OrthoDB" id="4474610at2"/>
<dbReference type="PhylomeDB" id="P39352"/>
<dbReference type="BioCyc" id="EcoCyc:YJHB-MONOMER"/>
<dbReference type="BioCyc" id="MetaCyc:YJHB-MONOMER"/>
<dbReference type="EvolutionaryTrace" id="P39352"/>
<dbReference type="PRO" id="PR:P39352"/>
<dbReference type="Proteomes" id="UP000000625">
    <property type="component" value="Chromosome"/>
</dbReference>
<dbReference type="GO" id="GO:0005886">
    <property type="term" value="C:plasma membrane"/>
    <property type="evidence" value="ECO:0000314"/>
    <property type="project" value="EcoCyc"/>
</dbReference>
<dbReference type="GO" id="GO:0046943">
    <property type="term" value="F:carboxylic acid transmembrane transporter activity"/>
    <property type="evidence" value="ECO:0000318"/>
    <property type="project" value="GO_Central"/>
</dbReference>
<dbReference type="GO" id="GO:0046942">
    <property type="term" value="P:carboxylic acid transport"/>
    <property type="evidence" value="ECO:0000318"/>
    <property type="project" value="GO_Central"/>
</dbReference>
<dbReference type="CDD" id="cd17316">
    <property type="entry name" value="MFS_SV2_like"/>
    <property type="match status" value="1"/>
</dbReference>
<dbReference type="Gene3D" id="1.20.1250.20">
    <property type="entry name" value="MFS general substrate transporter like domains"/>
    <property type="match status" value="1"/>
</dbReference>
<dbReference type="InterPro" id="IPR011701">
    <property type="entry name" value="MFS"/>
</dbReference>
<dbReference type="InterPro" id="IPR020846">
    <property type="entry name" value="MFS_dom"/>
</dbReference>
<dbReference type="InterPro" id="IPR036259">
    <property type="entry name" value="MFS_trans_sf"/>
</dbReference>
<dbReference type="NCBIfam" id="NF008963">
    <property type="entry name" value="PRK12307.1"/>
    <property type="match status" value="1"/>
</dbReference>
<dbReference type="PANTHER" id="PTHR23508">
    <property type="entry name" value="CARBOXYLIC ACID TRANSPORTER PROTEIN HOMOLOG"/>
    <property type="match status" value="1"/>
</dbReference>
<dbReference type="PANTHER" id="PTHR23508:SF2">
    <property type="entry name" value="METABOLITE TRANSPORT PROTEIN YJHB-RELATED"/>
    <property type="match status" value="1"/>
</dbReference>
<dbReference type="Pfam" id="PF07690">
    <property type="entry name" value="MFS_1"/>
    <property type="match status" value="1"/>
</dbReference>
<dbReference type="SUPFAM" id="SSF103473">
    <property type="entry name" value="MFS general substrate transporter"/>
    <property type="match status" value="1"/>
</dbReference>
<dbReference type="PROSITE" id="PS50850">
    <property type="entry name" value="MFS"/>
    <property type="match status" value="1"/>
</dbReference>
<keyword id="KW-0002">3D-structure</keyword>
<keyword id="KW-0997">Cell inner membrane</keyword>
<keyword id="KW-1003">Cell membrane</keyword>
<keyword id="KW-0472">Membrane</keyword>
<keyword id="KW-1185">Reference proteome</keyword>
<keyword id="KW-0812">Transmembrane</keyword>
<keyword id="KW-1133">Transmembrane helix</keyword>
<keyword id="KW-0813">Transport</keyword>
<proteinExistence type="evidence at protein level"/>
<sequence length="405" mass="44104">MATAWYKQVNPPQRKALFSAWLGYVFDGFDFMMIFYILHIIKADLGITDIQATLIGTVAFIARPIGGGFFGAMADKYGRKPMMMWAIFIYSVGTGLSGIATNLYMLAVCRFIVGLGMSGEYACASTYAVESWPKNLQSKASAFLVSGFSVGNIIAAQIIPQFAEVYGWRNSFFIGLLPVLLVLWIRKSAPESQEWIEDKYKDKSTFLSVFRKPHLSISMIVFLVCFCLFGANWPINGLLPSYLADNGVNTVVISTLMTIAGLGTLTGTIFFGFVGDKIGVKKAFVVGLITSFIFLCPLFFISVKNSSLIGLCLFGLMFTNLGIAGLVPKFIYDYFPTKLRGLGTGLIYNLGATGGMAAPVLATYISGYYGLGVSLFIVTVAFSALLILLVGFDIPGKIYKLSVAK</sequence>
<organism>
    <name type="scientific">Escherichia coli (strain K12)</name>
    <dbReference type="NCBI Taxonomy" id="83333"/>
    <lineage>
        <taxon>Bacteria</taxon>
        <taxon>Pseudomonadati</taxon>
        <taxon>Pseudomonadota</taxon>
        <taxon>Gammaproteobacteria</taxon>
        <taxon>Enterobacterales</taxon>
        <taxon>Enterobacteriaceae</taxon>
        <taxon>Escherichia</taxon>
    </lineage>
</organism>
<reference key="1">
    <citation type="journal article" date="1995" name="Nucleic Acids Res.">
        <title>Analysis of the Escherichia coli genome VI: DNA sequence of the region from 92.8 through 100 minutes.</title>
        <authorList>
            <person name="Burland V.D."/>
            <person name="Plunkett G. III"/>
            <person name="Sofia H.J."/>
            <person name="Daniels D.L."/>
            <person name="Blattner F.R."/>
        </authorList>
    </citation>
    <scope>NUCLEOTIDE SEQUENCE [LARGE SCALE GENOMIC DNA]</scope>
    <source>
        <strain>K12 / MG1655 / ATCC 47076</strain>
    </source>
</reference>
<reference key="2">
    <citation type="journal article" date="1997" name="Science">
        <title>The complete genome sequence of Escherichia coli K-12.</title>
        <authorList>
            <person name="Blattner F.R."/>
            <person name="Plunkett G. III"/>
            <person name="Bloch C.A."/>
            <person name="Perna N.T."/>
            <person name="Burland V."/>
            <person name="Riley M."/>
            <person name="Collado-Vides J."/>
            <person name="Glasner J.D."/>
            <person name="Rode C.K."/>
            <person name="Mayhew G.F."/>
            <person name="Gregor J."/>
            <person name="Davis N.W."/>
            <person name="Kirkpatrick H.A."/>
            <person name="Goeden M.A."/>
            <person name="Rose D.J."/>
            <person name="Mau B."/>
            <person name="Shao Y."/>
        </authorList>
    </citation>
    <scope>NUCLEOTIDE SEQUENCE [LARGE SCALE GENOMIC DNA]</scope>
    <source>
        <strain>K12 / MG1655 / ATCC 47076</strain>
    </source>
</reference>
<reference key="3">
    <citation type="journal article" date="2006" name="Mol. Syst. Biol.">
        <title>Highly accurate genome sequences of Escherichia coli K-12 strains MG1655 and W3110.</title>
        <authorList>
            <person name="Hayashi K."/>
            <person name="Morooka N."/>
            <person name="Yamamoto Y."/>
            <person name="Fujita K."/>
            <person name="Isono K."/>
            <person name="Choi S."/>
            <person name="Ohtsubo E."/>
            <person name="Baba T."/>
            <person name="Wanner B.L."/>
            <person name="Mori H."/>
            <person name="Horiuchi T."/>
        </authorList>
    </citation>
    <scope>NUCLEOTIDE SEQUENCE [LARGE SCALE GENOMIC DNA]</scope>
    <source>
        <strain>K12 / W3110 / ATCC 27325 / DSM 5911</strain>
    </source>
</reference>
<reference key="4">
    <citation type="journal article" date="2013" name="J. Bacteriol.">
        <title>Control of the Escherichia coli sialoregulon by transcriptional repressor NanR.</title>
        <authorList>
            <person name="Kalivoda K.A."/>
            <person name="Steenbergen S.M."/>
            <person name="Vimr E.R."/>
        </authorList>
    </citation>
    <scope>INDUCTION</scope>
</reference>
<reference key="5">
    <citation type="journal article" date="2020" name="Biosci. Rep.">
        <title>The putative Escherichia coli dehydrogenase YjhC metabolises two dehydrated forms of N-acetylneuraminate produced by some sialidases.</title>
        <authorList>
            <person name="Kentache T."/>
            <person name="Thabault L."/>
            <person name="Peracchi A."/>
            <person name="Frederick R."/>
            <person name="Bommer G.T."/>
            <person name="Van Schaftingen E."/>
        </authorList>
    </citation>
    <scope>FUNCTION</scope>
    <scope>DISRUPTION PHENOTYPE</scope>
</reference>
<reference key="6">
    <citation type="journal article" date="2020" name="J. Biol. Chem.">
        <title>Uncovering a novel molecular mechanism for scavenging sialic acids in bacteria.</title>
        <authorList>
            <person name="Bell A."/>
            <person name="Severi E."/>
            <person name="Lee M."/>
            <person name="Monaco S."/>
            <person name="Latousakis D."/>
            <person name="Angulo J."/>
            <person name="Thomas G.H."/>
            <person name="Naismith J.H."/>
            <person name="Juge N."/>
        </authorList>
    </citation>
    <scope>FUNCTION</scope>
    <scope>DISRUPTION PHENOTYPE</scope>
    <source>
        <strain>K12 / BW25113</strain>
    </source>
</reference>